<feature type="chain" id="PRO_0000096605" description="Axoneme-associated protein mst101(2)">
    <location>
        <begin position="1"/>
        <end position="1391"/>
    </location>
</feature>
<feature type="repeat" description="1">
    <location>
        <begin position="332"/>
        <end position="347"/>
    </location>
</feature>
<feature type="repeat" description="2">
    <location>
        <begin position="348"/>
        <end position="363"/>
    </location>
</feature>
<feature type="repeat" description="3">
    <location>
        <begin position="364"/>
        <end position="379"/>
    </location>
</feature>
<feature type="repeat" description="4">
    <location>
        <begin position="380"/>
        <end position="395"/>
    </location>
</feature>
<feature type="repeat" description="5">
    <location>
        <begin position="396"/>
        <end position="411"/>
    </location>
</feature>
<feature type="repeat" description="6">
    <location>
        <begin position="412"/>
        <end position="427"/>
    </location>
</feature>
<feature type="repeat" description="7">
    <location>
        <begin position="428"/>
        <end position="443"/>
    </location>
</feature>
<feature type="repeat" description="8">
    <location>
        <begin position="444"/>
        <end position="459"/>
    </location>
</feature>
<feature type="repeat" description="9">
    <location>
        <begin position="460"/>
        <end position="475"/>
    </location>
</feature>
<feature type="repeat" description="10">
    <location>
        <begin position="476"/>
        <end position="491"/>
    </location>
</feature>
<feature type="repeat" description="11">
    <location>
        <begin position="492"/>
        <end position="507"/>
    </location>
</feature>
<feature type="repeat" description="12">
    <location>
        <begin position="508"/>
        <end position="523"/>
    </location>
</feature>
<feature type="repeat" description="13">
    <location>
        <begin position="524"/>
        <end position="539"/>
    </location>
</feature>
<feature type="repeat" description="14">
    <location>
        <begin position="540"/>
        <end position="555"/>
    </location>
</feature>
<feature type="repeat" description="15">
    <location>
        <begin position="556"/>
        <end position="571"/>
    </location>
</feature>
<feature type="repeat" description="16">
    <location>
        <begin position="572"/>
        <end position="587"/>
    </location>
</feature>
<feature type="repeat" description="17">
    <location>
        <begin position="588"/>
        <end position="603"/>
    </location>
</feature>
<feature type="repeat" description="18">
    <location>
        <begin position="604"/>
        <end position="619"/>
    </location>
</feature>
<feature type="repeat" description="19">
    <location>
        <begin position="620"/>
        <end position="635"/>
    </location>
</feature>
<feature type="repeat" description="20">
    <location>
        <begin position="636"/>
        <end position="651"/>
    </location>
</feature>
<feature type="repeat" description="21">
    <location>
        <begin position="652"/>
        <end position="667"/>
    </location>
</feature>
<feature type="repeat" description="22">
    <location>
        <begin position="668"/>
        <end position="683"/>
    </location>
</feature>
<feature type="repeat" description="23">
    <location>
        <begin position="684"/>
        <end position="699"/>
    </location>
</feature>
<feature type="repeat" description="24">
    <location>
        <begin position="700"/>
        <end position="715"/>
    </location>
</feature>
<feature type="repeat" description="25">
    <location>
        <begin position="716"/>
        <end position="731"/>
    </location>
</feature>
<feature type="repeat" description="26">
    <location>
        <begin position="732"/>
        <end position="747"/>
    </location>
</feature>
<feature type="repeat" description="27">
    <location>
        <begin position="748"/>
        <end position="763"/>
    </location>
</feature>
<feature type="repeat" description="28">
    <location>
        <begin position="764"/>
        <end position="779"/>
    </location>
</feature>
<feature type="repeat" description="29">
    <location>
        <begin position="780"/>
        <end position="795"/>
    </location>
</feature>
<feature type="repeat" description="30">
    <location>
        <begin position="796"/>
        <end position="811"/>
    </location>
</feature>
<feature type="repeat" description="31">
    <location>
        <begin position="812"/>
        <end position="827"/>
    </location>
</feature>
<feature type="repeat" description="32">
    <location>
        <begin position="828"/>
        <end position="843"/>
    </location>
</feature>
<feature type="repeat" description="33">
    <location>
        <begin position="844"/>
        <end position="859"/>
    </location>
</feature>
<feature type="repeat" description="34">
    <location>
        <begin position="860"/>
        <end position="875"/>
    </location>
</feature>
<feature type="repeat" description="35">
    <location>
        <begin position="876"/>
        <end position="891"/>
    </location>
</feature>
<feature type="repeat" description="36">
    <location>
        <begin position="892"/>
        <end position="907"/>
    </location>
</feature>
<feature type="repeat" description="37">
    <location>
        <begin position="908"/>
        <end position="923"/>
    </location>
</feature>
<feature type="repeat" description="38">
    <location>
        <begin position="924"/>
        <end position="939"/>
    </location>
</feature>
<feature type="repeat" description="39">
    <location>
        <begin position="940"/>
        <end position="955"/>
    </location>
</feature>
<feature type="repeat" description="40">
    <location>
        <begin position="956"/>
        <end position="971"/>
    </location>
</feature>
<feature type="repeat" description="41">
    <location>
        <begin position="972"/>
        <end position="987"/>
    </location>
</feature>
<feature type="repeat" description="42">
    <location>
        <begin position="988"/>
        <end position="1003"/>
    </location>
</feature>
<feature type="repeat" description="43">
    <location>
        <begin position="1004"/>
        <end position="1019"/>
    </location>
</feature>
<feature type="repeat" description="44">
    <location>
        <begin position="1020"/>
        <end position="1035"/>
    </location>
</feature>
<feature type="repeat" description="45">
    <location>
        <begin position="1036"/>
        <end position="1051"/>
    </location>
</feature>
<feature type="repeat" description="46">
    <location>
        <begin position="1052"/>
        <end position="1067"/>
    </location>
</feature>
<feature type="repeat" description="47">
    <location>
        <begin position="1068"/>
        <end position="1083"/>
    </location>
</feature>
<feature type="repeat" description="48">
    <location>
        <begin position="1084"/>
        <end position="1099"/>
    </location>
</feature>
<feature type="repeat" description="49">
    <location>
        <begin position="1100"/>
        <end position="1115"/>
    </location>
</feature>
<feature type="repeat" description="50">
    <location>
        <begin position="1116"/>
        <end position="1131"/>
    </location>
</feature>
<feature type="repeat" description="51">
    <location>
        <begin position="1132"/>
        <end position="1147"/>
    </location>
</feature>
<feature type="repeat" description="52">
    <location>
        <begin position="1148"/>
        <end position="1163"/>
    </location>
</feature>
<feature type="repeat" description="53">
    <location>
        <begin position="1164"/>
        <end position="1179"/>
    </location>
</feature>
<feature type="repeat" description="54">
    <location>
        <begin position="1180"/>
        <end position="1195"/>
    </location>
</feature>
<feature type="repeat" description="55">
    <location>
        <begin position="1196"/>
        <end position="1211"/>
    </location>
</feature>
<feature type="repeat" description="56">
    <location>
        <begin position="1212"/>
        <end position="1227"/>
    </location>
</feature>
<feature type="repeat" description="57">
    <location>
        <begin position="1228"/>
        <end position="1243"/>
    </location>
</feature>
<feature type="repeat" description="58">
    <location>
        <begin position="1244"/>
        <end position="1259"/>
    </location>
</feature>
<feature type="repeat" description="59">
    <location>
        <begin position="1260"/>
        <end position="1275"/>
    </location>
</feature>
<feature type="region of interest" description="Disordered" evidence="1">
    <location>
        <begin position="170"/>
        <end position="213"/>
    </location>
</feature>
<feature type="region of interest" description="Disordered" evidence="1">
    <location>
        <begin position="280"/>
        <end position="300"/>
    </location>
</feature>
<feature type="region of interest" description="59 X 16 AA approximate tandem repeats of [KR]-K-X-C-X-X-X-A-K-X-X-K-X-X-X-E">
    <location>
        <begin position="332"/>
        <end position="1275"/>
    </location>
</feature>
<feature type="region of interest" description="Disordered" evidence="1">
    <location>
        <begin position="370"/>
        <end position="429"/>
    </location>
</feature>
<feature type="region of interest" description="Disordered" evidence="1">
    <location>
        <begin position="516"/>
        <end position="577"/>
    </location>
</feature>
<feature type="region of interest" description="Disordered" evidence="1">
    <location>
        <begin position="729"/>
        <end position="881"/>
    </location>
</feature>
<feature type="region of interest" description="Disordered" evidence="1">
    <location>
        <begin position="900"/>
        <end position="922"/>
    </location>
</feature>
<feature type="region of interest" description="Disordered" evidence="1">
    <location>
        <begin position="934"/>
        <end position="1013"/>
    </location>
</feature>
<feature type="region of interest" description="Disordered" evidence="1">
    <location>
        <begin position="1076"/>
        <end position="1095"/>
    </location>
</feature>
<feature type="region of interest" description="Disordered" evidence="1">
    <location>
        <begin position="1104"/>
        <end position="1212"/>
    </location>
</feature>
<feature type="region of interest" description="Disordered" evidence="1">
    <location>
        <begin position="1353"/>
        <end position="1391"/>
    </location>
</feature>
<feature type="compositionally biased region" description="Basic residues" evidence="1">
    <location>
        <begin position="184"/>
        <end position="201"/>
    </location>
</feature>
<feature type="compositionally biased region" description="Basic and acidic residues" evidence="1">
    <location>
        <begin position="291"/>
        <end position="300"/>
    </location>
</feature>
<feature type="compositionally biased region" description="Basic and acidic residues" evidence="1">
    <location>
        <begin position="517"/>
        <end position="577"/>
    </location>
</feature>
<feature type="compositionally biased region" description="Basic residues" evidence="1">
    <location>
        <begin position="729"/>
        <end position="765"/>
    </location>
</feature>
<feature type="compositionally biased region" description="Basic and acidic residues" evidence="1">
    <location>
        <begin position="766"/>
        <end position="881"/>
    </location>
</feature>
<feature type="compositionally biased region" description="Basic residues" evidence="1">
    <location>
        <begin position="934"/>
        <end position="949"/>
    </location>
</feature>
<feature type="compositionally biased region" description="Basic residues" evidence="1">
    <location>
        <begin position="956"/>
        <end position="976"/>
    </location>
</feature>
<feature type="compositionally biased region" description="Basic and acidic residues" evidence="1">
    <location>
        <begin position="977"/>
        <end position="1013"/>
    </location>
</feature>
<feature type="compositionally biased region" description="Basic and acidic residues" evidence="1">
    <location>
        <begin position="1353"/>
        <end position="1370"/>
    </location>
</feature>
<feature type="compositionally biased region" description="Basic residues" evidence="1">
    <location>
        <begin position="1371"/>
        <end position="1391"/>
    </location>
</feature>
<protein>
    <recommendedName>
        <fullName>Axoneme-associated protein mst101(2)</fullName>
    </recommendedName>
</protein>
<dbReference type="EMBL" id="X73481">
    <property type="protein sequence ID" value="CAA51876.1"/>
    <property type="molecule type" value="Genomic_DNA"/>
</dbReference>
<dbReference type="PIR" id="S51364">
    <property type="entry name" value="S51364"/>
</dbReference>
<dbReference type="SMR" id="Q08696"/>
<dbReference type="OrthoDB" id="7871356at2759"/>
<dbReference type="Proteomes" id="UP000504633">
    <property type="component" value="Unplaced"/>
</dbReference>
<dbReference type="GO" id="GO:0005737">
    <property type="term" value="C:cytoplasm"/>
    <property type="evidence" value="ECO:0000314"/>
    <property type="project" value="UniProtKB"/>
</dbReference>
<dbReference type="GO" id="GO:0007288">
    <property type="term" value="P:sperm axoneme assembly"/>
    <property type="evidence" value="ECO:0000270"/>
    <property type="project" value="UniProtKB"/>
</dbReference>
<evidence type="ECO:0000256" key="1">
    <source>
        <dbReference type="SAM" id="MobiDB-lite"/>
    </source>
</evidence>
<evidence type="ECO:0000269" key="2">
    <source>
    </source>
</evidence>
<accession>Q08696</accession>
<proteinExistence type="evidence at protein level"/>
<gene>
    <name type="primary">mst101(2)</name>
</gene>
<name>MST2_DROHY</name>
<organism>
    <name type="scientific">Drosophila hydei</name>
    <name type="common">Fruit fly</name>
    <dbReference type="NCBI Taxonomy" id="7224"/>
    <lineage>
        <taxon>Eukaryota</taxon>
        <taxon>Metazoa</taxon>
        <taxon>Ecdysozoa</taxon>
        <taxon>Arthropoda</taxon>
        <taxon>Hexapoda</taxon>
        <taxon>Insecta</taxon>
        <taxon>Pterygota</taxon>
        <taxon>Neoptera</taxon>
        <taxon>Endopterygota</taxon>
        <taxon>Diptera</taxon>
        <taxon>Brachycera</taxon>
        <taxon>Muscomorpha</taxon>
        <taxon>Ephydroidea</taxon>
        <taxon>Drosophilidae</taxon>
        <taxon>Drosophila</taxon>
    </lineage>
</organism>
<comment type="function">
    <text>Possible structural role in the sperm tail.</text>
</comment>
<comment type="subcellular location">
    <subcellularLocation>
        <location>Cytoplasm</location>
    </subcellularLocation>
</comment>
<comment type="tissue specificity">
    <text>Testis. Primary spermatocytes and early spermatids.</text>
</comment>
<comment type="domain">
    <text>The predominant structure is alpha-helical.</text>
</comment>
<comment type="polymorphism">
    <text evidence="2">Length polymorphisms exist between different strains, most likely caused by length variations within the tandem repeats.</text>
</comment>
<reference key="1">
    <citation type="journal article" date="1994" name="Eur. J. Biochem.">
        <title>Tandemly arranged repeats of a novel highly charged 16-amino-acid motif representing the major component of the sperm-tail-specific axoneme-associated protein family Dhmst101 form extended alpha-helical rods within the extremely elongated spermatozoa of Drosophila hydei.</title>
        <authorList>
            <person name="Neesen J."/>
            <person name="Padmanabhan S."/>
            <person name="Buenemann H."/>
        </authorList>
    </citation>
    <scope>NUCLEOTIDE SEQUENCE [GENOMIC DNA]</scope>
    <scope>CHARACTERIZATION</scope>
    <scope>POLYMORPHISM</scope>
</reference>
<sequence length="1391" mass="159002">MSLCRCSSICLRRPILRSFNFLNKYIDQSQHSGGLSSFQRLSFSNTGKNESTDDSNQIRCDADKTAADKKKQKQKEEEQAKIREYKRECLKVQKRVLAEEIRCSGEKDRILIQGMMKCLTDGMKKACTKIAKAKLIADKELAVQCAALSKKDKVKALLKKCEREKSKEKECNQNSPAEGDKDRTKKGKTKGKSGGGNKKRSTKENRAKKGKKLVKNRFTQKLEHCIKSEWADVCECRQNFTEDERKRLAASYKCMGTKIKSICRKRVIAEMCEAAGYVKSSEPKKKGKKKKNDEKKEKELEREILKEQAEEEAKIRGVVKEVKKKCKEKALKKKCKDLGRKMKEEAEKKKCAALAKKQKEEDEKKACKELAKKKKEADEKKKCEEAANKEKKAAEKKKCEKAAKERKEAAEKKKCEEAAKKEKEAAERKKCEELAKNIKKAAEKKKCKEAAKKEKEAAERKKCEELAKKIKKAAEKKKCEETAKKGKEVAERKKCEELAKKIKKAEIKKKCKKLAKKEKETAEKKKCEKAAKKRKEAAEKKKCEKAAKKRKEAAEKKKCEKSAKKRKEAAEKKKCEKAAKERKEAAEKKKCEEAAKKEKEVAERKKCEELAKKIKKAAEKKKCKEAAKKEKEAAEREKCGELAKKIKKAAEKKKCKKLAKKEKETAEKKKCEKAAKKRKEAAEKKKCAEAAKKEKEAAEKKKCEEAAKKEKEAAERKKCEELAKKIKKAAEKKKCKKLAKKKKAGEKNKLKKGNKKGKKALKEKKKCRELAKKKAAEKKKCKEAAKKEKEAAEKKKCEKTAKKRKEEAEKKKCEKTAKKRKEAAEKKKCEKAAKKRKEEAEKKKCEKTAKKRKETAEKKKCEKAAKKRKQAAEKKKCEKAAKKRKEAAEKKKCAEAAKKEKELAEKKKCEEAAKKEKEVAERKKCEELAKKIKKAAEKKKCKKLAKKEKKAGEKNKLKKKAGKGKKKCKKLGKKSKRAAEKKKCAEAAKKEKEAATKKKCEERAKKQKEAAEKKQCEERAKKLKEAAEQKQCEERAKKLKEAAEKKQCEERAKKLKEAAEQKQCEERAKKLKEAAEKKQCEERAKKEKEAAEKKQCEERAKKLKEAAEKKQCEERAKKEKEAAEKKRCEEAAKREKEAAEKKKCAEAAKKEKEATEKQKCAEAAKKEKEAAEKKKCAEAAKREKEAAQKKKCADLAKKEQEPAEMKKCEEAAKKEKEAAEKQKCAKAAKKEKEAAEKKKCAEAAKKEQEAAEKKKCAEAAKKEKEAEKKRKCEKAEKAAALKRQCAKLVIRAKEAALRKKCAIIAKKAKMAAEKKECEKLAKKAKEAIEWKKCAKLAKKKREAEKKKCAKLAKKEKEAAEKKKRCKDLAKNKKKGHKKKGRNENRKKRTDC</sequence>
<keyword id="KW-0963">Cytoplasm</keyword>
<keyword id="KW-0677">Repeat</keyword>